<comment type="similarity">
    <text evidence="1">Belongs to the bacterial ribosomal protein bL33 family.</text>
</comment>
<protein>
    <recommendedName>
        <fullName evidence="1">Large ribosomal subunit protein bL33</fullName>
    </recommendedName>
    <alternativeName>
        <fullName evidence="3">50S ribosomal protein L33</fullName>
    </alternativeName>
</protein>
<sequence>MAKGARDKIKLESTAGTGHFYTTTKNKRNMPEKMEIMKFDPVARKHVAYKETKIK</sequence>
<evidence type="ECO:0000255" key="1">
    <source>
        <dbReference type="HAMAP-Rule" id="MF_00294"/>
    </source>
</evidence>
<evidence type="ECO:0000256" key="2">
    <source>
        <dbReference type="SAM" id="MobiDB-lite"/>
    </source>
</evidence>
<evidence type="ECO:0000305" key="3"/>
<accession>A3NSE2</accession>
<proteinExistence type="inferred from homology"/>
<feature type="chain" id="PRO_1000115112" description="Large ribosomal subunit protein bL33">
    <location>
        <begin position="1"/>
        <end position="55"/>
    </location>
</feature>
<feature type="region of interest" description="Disordered" evidence="2">
    <location>
        <begin position="1"/>
        <end position="24"/>
    </location>
</feature>
<feature type="compositionally biased region" description="Basic and acidic residues" evidence="2">
    <location>
        <begin position="1"/>
        <end position="11"/>
    </location>
</feature>
<feature type="compositionally biased region" description="Polar residues" evidence="2">
    <location>
        <begin position="14"/>
        <end position="24"/>
    </location>
</feature>
<keyword id="KW-0687">Ribonucleoprotein</keyword>
<keyword id="KW-0689">Ribosomal protein</keyword>
<reference key="1">
    <citation type="journal article" date="2010" name="Genome Biol. Evol.">
        <title>Continuing evolution of Burkholderia mallei through genome reduction and large-scale rearrangements.</title>
        <authorList>
            <person name="Losada L."/>
            <person name="Ronning C.M."/>
            <person name="DeShazer D."/>
            <person name="Woods D."/>
            <person name="Fedorova N."/>
            <person name="Kim H.S."/>
            <person name="Shabalina S.A."/>
            <person name="Pearson T.R."/>
            <person name="Brinkac L."/>
            <person name="Tan P."/>
            <person name="Nandi T."/>
            <person name="Crabtree J."/>
            <person name="Badger J."/>
            <person name="Beckstrom-Sternberg S."/>
            <person name="Saqib M."/>
            <person name="Schutzer S.E."/>
            <person name="Keim P."/>
            <person name="Nierman W.C."/>
        </authorList>
    </citation>
    <scope>NUCLEOTIDE SEQUENCE [LARGE SCALE GENOMIC DNA]</scope>
    <source>
        <strain>1106a</strain>
    </source>
</reference>
<organism>
    <name type="scientific">Burkholderia pseudomallei (strain 1106a)</name>
    <dbReference type="NCBI Taxonomy" id="357348"/>
    <lineage>
        <taxon>Bacteria</taxon>
        <taxon>Pseudomonadati</taxon>
        <taxon>Pseudomonadota</taxon>
        <taxon>Betaproteobacteria</taxon>
        <taxon>Burkholderiales</taxon>
        <taxon>Burkholderiaceae</taxon>
        <taxon>Burkholderia</taxon>
        <taxon>pseudomallei group</taxon>
    </lineage>
</organism>
<name>RL33_BURP0</name>
<gene>
    <name evidence="1" type="primary">rpmG</name>
    <name type="ordered locus">BURPS1106A_0982</name>
</gene>
<dbReference type="EMBL" id="CP000572">
    <property type="protein sequence ID" value="ABN90798.1"/>
    <property type="molecule type" value="Genomic_DNA"/>
</dbReference>
<dbReference type="RefSeq" id="WP_004185395.1">
    <property type="nucleotide sequence ID" value="NC_009076.1"/>
</dbReference>
<dbReference type="SMR" id="A3NSE2"/>
<dbReference type="GeneID" id="95550920"/>
<dbReference type="KEGG" id="bpl:BURPS1106A_0982"/>
<dbReference type="HOGENOM" id="CLU_190949_1_1_4"/>
<dbReference type="Proteomes" id="UP000006738">
    <property type="component" value="Chromosome I"/>
</dbReference>
<dbReference type="GO" id="GO:0022625">
    <property type="term" value="C:cytosolic large ribosomal subunit"/>
    <property type="evidence" value="ECO:0007669"/>
    <property type="project" value="TreeGrafter"/>
</dbReference>
<dbReference type="GO" id="GO:0003735">
    <property type="term" value="F:structural constituent of ribosome"/>
    <property type="evidence" value="ECO:0007669"/>
    <property type="project" value="InterPro"/>
</dbReference>
<dbReference type="GO" id="GO:0006412">
    <property type="term" value="P:translation"/>
    <property type="evidence" value="ECO:0007669"/>
    <property type="project" value="UniProtKB-UniRule"/>
</dbReference>
<dbReference type="FunFam" id="2.20.28.120:FF:000001">
    <property type="entry name" value="50S ribosomal protein L33"/>
    <property type="match status" value="1"/>
</dbReference>
<dbReference type="Gene3D" id="2.20.28.120">
    <property type="entry name" value="Ribosomal protein L33"/>
    <property type="match status" value="1"/>
</dbReference>
<dbReference type="HAMAP" id="MF_00294">
    <property type="entry name" value="Ribosomal_bL33"/>
    <property type="match status" value="1"/>
</dbReference>
<dbReference type="InterPro" id="IPR001705">
    <property type="entry name" value="Ribosomal_bL33"/>
</dbReference>
<dbReference type="InterPro" id="IPR018264">
    <property type="entry name" value="Ribosomal_bL33_CS"/>
</dbReference>
<dbReference type="InterPro" id="IPR038584">
    <property type="entry name" value="Ribosomal_bL33_sf"/>
</dbReference>
<dbReference type="InterPro" id="IPR011332">
    <property type="entry name" value="Ribosomal_zn-bd"/>
</dbReference>
<dbReference type="NCBIfam" id="NF001860">
    <property type="entry name" value="PRK00595.1"/>
    <property type="match status" value="1"/>
</dbReference>
<dbReference type="NCBIfam" id="TIGR01023">
    <property type="entry name" value="rpmG_bact"/>
    <property type="match status" value="1"/>
</dbReference>
<dbReference type="PANTHER" id="PTHR15238">
    <property type="entry name" value="54S RIBOSOMAL PROTEIN L39, MITOCHONDRIAL"/>
    <property type="match status" value="1"/>
</dbReference>
<dbReference type="PANTHER" id="PTHR15238:SF1">
    <property type="entry name" value="LARGE RIBOSOMAL SUBUNIT PROTEIN BL33M"/>
    <property type="match status" value="1"/>
</dbReference>
<dbReference type="Pfam" id="PF00471">
    <property type="entry name" value="Ribosomal_L33"/>
    <property type="match status" value="1"/>
</dbReference>
<dbReference type="SUPFAM" id="SSF57829">
    <property type="entry name" value="Zn-binding ribosomal proteins"/>
    <property type="match status" value="1"/>
</dbReference>
<dbReference type="PROSITE" id="PS00582">
    <property type="entry name" value="RIBOSOMAL_L33"/>
    <property type="match status" value="1"/>
</dbReference>